<organism>
    <name type="scientific">Staphylococcus carnosus (strain TM300)</name>
    <dbReference type="NCBI Taxonomy" id="396513"/>
    <lineage>
        <taxon>Bacteria</taxon>
        <taxon>Bacillati</taxon>
        <taxon>Bacillota</taxon>
        <taxon>Bacilli</taxon>
        <taxon>Bacillales</taxon>
        <taxon>Staphylococcaceae</taxon>
        <taxon>Staphylococcus</taxon>
    </lineage>
</organism>
<reference key="1">
    <citation type="journal article" date="2009" name="Appl. Environ. Microbiol.">
        <title>Genome analysis of the meat starter culture bacterium Staphylococcus carnosus TM300.</title>
        <authorList>
            <person name="Rosenstein R."/>
            <person name="Nerz C."/>
            <person name="Biswas L."/>
            <person name="Resch A."/>
            <person name="Raddatz G."/>
            <person name="Schuster S.C."/>
            <person name="Goetz F."/>
        </authorList>
    </citation>
    <scope>NUCLEOTIDE SEQUENCE [LARGE SCALE GENOMIC DNA]</scope>
    <source>
        <strain>TM300</strain>
    </source>
</reference>
<sequence length="240" mass="27034">MGVEWLVEKLQEHDITLNDKQKQQFQTYYELLVEWNEKMNLTSITDEEGVYLKHFYDSITAAFYIDMNQELSICDVGAGAGFPSIPLKIVFPQLKVTIVDSLNKRIQFLNHLADALDLRGVSVVHERAENFGNVRGDNRESYDIVTARAVARLSVLSELCLPLVKTGGHFIAMKSSKGEEELEEARFGIGVFGGRVEAVETFELPGDAGERQMIIIEKRSKTPKKYPRKAGTPNKSPLLK</sequence>
<proteinExistence type="inferred from homology"/>
<gene>
    <name evidence="1" type="primary">rsmG</name>
    <name type="ordered locus">Sca_0005</name>
</gene>
<keyword id="KW-0963">Cytoplasm</keyword>
<keyword id="KW-0489">Methyltransferase</keyword>
<keyword id="KW-1185">Reference proteome</keyword>
<keyword id="KW-0698">rRNA processing</keyword>
<keyword id="KW-0949">S-adenosyl-L-methionine</keyword>
<keyword id="KW-0808">Transferase</keyword>
<dbReference type="EC" id="2.1.1.-" evidence="1"/>
<dbReference type="EMBL" id="AM295250">
    <property type="protein sequence ID" value="CAL26920.1"/>
    <property type="molecule type" value="Genomic_DNA"/>
</dbReference>
<dbReference type="RefSeq" id="WP_012664035.1">
    <property type="nucleotide sequence ID" value="NC_012121.1"/>
</dbReference>
<dbReference type="SMR" id="B9DI97"/>
<dbReference type="GeneID" id="93794921"/>
<dbReference type="KEGG" id="sca:SCA_0005"/>
<dbReference type="eggNOG" id="COG0357">
    <property type="taxonomic scope" value="Bacteria"/>
</dbReference>
<dbReference type="HOGENOM" id="CLU_065341_0_0_9"/>
<dbReference type="OrthoDB" id="9808773at2"/>
<dbReference type="BioCyc" id="SCAR396513:SCA_RS00025-MONOMER"/>
<dbReference type="Proteomes" id="UP000000444">
    <property type="component" value="Chromosome"/>
</dbReference>
<dbReference type="GO" id="GO:0005829">
    <property type="term" value="C:cytosol"/>
    <property type="evidence" value="ECO:0007669"/>
    <property type="project" value="TreeGrafter"/>
</dbReference>
<dbReference type="GO" id="GO:0070043">
    <property type="term" value="F:rRNA (guanine-N7-)-methyltransferase activity"/>
    <property type="evidence" value="ECO:0007669"/>
    <property type="project" value="UniProtKB-UniRule"/>
</dbReference>
<dbReference type="CDD" id="cd02440">
    <property type="entry name" value="AdoMet_MTases"/>
    <property type="match status" value="1"/>
</dbReference>
<dbReference type="FunFam" id="3.40.50.150:FF:000041">
    <property type="entry name" value="Ribosomal RNA small subunit methyltransferase G"/>
    <property type="match status" value="1"/>
</dbReference>
<dbReference type="Gene3D" id="3.40.50.150">
    <property type="entry name" value="Vaccinia Virus protein VP39"/>
    <property type="match status" value="1"/>
</dbReference>
<dbReference type="HAMAP" id="MF_00074">
    <property type="entry name" value="16SrRNA_methyltr_G"/>
    <property type="match status" value="1"/>
</dbReference>
<dbReference type="InterPro" id="IPR003682">
    <property type="entry name" value="rRNA_ssu_MeTfrase_G"/>
</dbReference>
<dbReference type="InterPro" id="IPR029063">
    <property type="entry name" value="SAM-dependent_MTases_sf"/>
</dbReference>
<dbReference type="NCBIfam" id="TIGR00138">
    <property type="entry name" value="rsmG_gidB"/>
    <property type="match status" value="1"/>
</dbReference>
<dbReference type="PANTHER" id="PTHR31760">
    <property type="entry name" value="S-ADENOSYL-L-METHIONINE-DEPENDENT METHYLTRANSFERASES SUPERFAMILY PROTEIN"/>
    <property type="match status" value="1"/>
</dbReference>
<dbReference type="PANTHER" id="PTHR31760:SF0">
    <property type="entry name" value="S-ADENOSYL-L-METHIONINE-DEPENDENT METHYLTRANSFERASES SUPERFAMILY PROTEIN"/>
    <property type="match status" value="1"/>
</dbReference>
<dbReference type="Pfam" id="PF02527">
    <property type="entry name" value="GidB"/>
    <property type="match status" value="1"/>
</dbReference>
<dbReference type="PIRSF" id="PIRSF003078">
    <property type="entry name" value="GidB"/>
    <property type="match status" value="1"/>
</dbReference>
<dbReference type="SUPFAM" id="SSF53335">
    <property type="entry name" value="S-adenosyl-L-methionine-dependent methyltransferases"/>
    <property type="match status" value="1"/>
</dbReference>
<feature type="chain" id="PRO_1000118198" description="Ribosomal RNA small subunit methyltransferase G">
    <location>
        <begin position="1"/>
        <end position="240"/>
    </location>
</feature>
<feature type="region of interest" description="Disordered" evidence="2">
    <location>
        <begin position="217"/>
        <end position="240"/>
    </location>
</feature>
<feature type="binding site" evidence="1">
    <location>
        <position position="77"/>
    </location>
    <ligand>
        <name>S-adenosyl-L-methionine</name>
        <dbReference type="ChEBI" id="CHEBI:59789"/>
    </ligand>
</feature>
<feature type="binding site" evidence="1">
    <location>
        <position position="82"/>
    </location>
    <ligand>
        <name>S-adenosyl-L-methionine</name>
        <dbReference type="ChEBI" id="CHEBI:59789"/>
    </ligand>
</feature>
<feature type="binding site" evidence="1">
    <location>
        <begin position="128"/>
        <end position="129"/>
    </location>
    <ligand>
        <name>S-adenosyl-L-methionine</name>
        <dbReference type="ChEBI" id="CHEBI:59789"/>
    </ligand>
</feature>
<feature type="binding site" evidence="1">
    <location>
        <position position="148"/>
    </location>
    <ligand>
        <name>S-adenosyl-L-methionine</name>
        <dbReference type="ChEBI" id="CHEBI:59789"/>
    </ligand>
</feature>
<evidence type="ECO:0000255" key="1">
    <source>
        <dbReference type="HAMAP-Rule" id="MF_00074"/>
    </source>
</evidence>
<evidence type="ECO:0000256" key="2">
    <source>
        <dbReference type="SAM" id="MobiDB-lite"/>
    </source>
</evidence>
<name>RSMG_STACT</name>
<accession>B9DI97</accession>
<comment type="function">
    <text evidence="1">Specifically methylates the N7 position of guanine in position 535 of 16S rRNA.</text>
</comment>
<comment type="subcellular location">
    <subcellularLocation>
        <location evidence="1">Cytoplasm</location>
    </subcellularLocation>
</comment>
<comment type="similarity">
    <text evidence="1">Belongs to the methyltransferase superfamily. RNA methyltransferase RsmG family.</text>
</comment>
<protein>
    <recommendedName>
        <fullName evidence="1">Ribosomal RNA small subunit methyltransferase G</fullName>
        <ecNumber evidence="1">2.1.1.-</ecNumber>
    </recommendedName>
    <alternativeName>
        <fullName evidence="1">16S rRNA 7-methylguanosine methyltransferase</fullName>
        <shortName evidence="1">16S rRNA m7G methyltransferase</shortName>
    </alternativeName>
</protein>